<reference key="1">
    <citation type="journal article" date="2001" name="DNA Res.">
        <title>Complete genomic sequence of the filamentous nitrogen-fixing cyanobacterium Anabaena sp. strain PCC 7120.</title>
        <authorList>
            <person name="Kaneko T."/>
            <person name="Nakamura Y."/>
            <person name="Wolk C.P."/>
            <person name="Kuritz T."/>
            <person name="Sasamoto S."/>
            <person name="Watanabe A."/>
            <person name="Iriguchi M."/>
            <person name="Ishikawa A."/>
            <person name="Kawashima K."/>
            <person name="Kimura T."/>
            <person name="Kishida Y."/>
            <person name="Kohara M."/>
            <person name="Matsumoto M."/>
            <person name="Matsuno A."/>
            <person name="Muraki A."/>
            <person name="Nakazaki N."/>
            <person name="Shimpo S."/>
            <person name="Sugimoto M."/>
            <person name="Takazawa M."/>
            <person name="Yamada M."/>
            <person name="Yasuda M."/>
            <person name="Tabata S."/>
        </authorList>
    </citation>
    <scope>NUCLEOTIDE SEQUENCE [LARGE SCALE GENOMIC DNA]</scope>
    <source>
        <strain>PCC 7120 / SAG 25.82 / UTEX 2576</strain>
    </source>
</reference>
<reference key="2">
    <citation type="journal article" date="1991" name="J. Bacteriol.">
        <title>Evolutionary relationships among eubacteria, cyanobacteria, and chloroplasts: evidence from the rpoC1 gene of Anabaena sp. strain PCC 7120.</title>
        <authorList>
            <person name="Bergsland K.J."/>
            <person name="Haselkorn R."/>
        </authorList>
    </citation>
    <scope>NUCLEOTIDE SEQUENCE [GENOMIC DNA] OF 1-63</scope>
</reference>
<dbReference type="EC" id="2.7.7.6" evidence="1"/>
<dbReference type="EMBL" id="BA000019">
    <property type="protein sequence ID" value="BAB77962.1"/>
    <property type="status" value="ALT_INIT"/>
    <property type="molecule type" value="Genomic_DNA"/>
</dbReference>
<dbReference type="EMBL" id="M60831">
    <property type="protein sequence ID" value="AAA22034.1"/>
    <property type="molecule type" value="Genomic_DNA"/>
</dbReference>
<dbReference type="PIR" id="AF2005">
    <property type="entry name" value="AF2005"/>
</dbReference>
<dbReference type="PIR" id="C42361">
    <property type="entry name" value="C42361"/>
</dbReference>
<dbReference type="RefSeq" id="WP_044521003.1">
    <property type="nucleotide sequence ID" value="NZ_RSCN01000041.1"/>
</dbReference>
<dbReference type="PDB" id="8H3V">
    <property type="method" value="EM"/>
    <property type="resolution" value="4.50 A"/>
    <property type="chains" value="B=6-1355"/>
</dbReference>
<dbReference type="PDB" id="8H40">
    <property type="method" value="EM"/>
    <property type="resolution" value="3.60 A"/>
    <property type="chains" value="B=6-1355"/>
</dbReference>
<dbReference type="PDBsum" id="8H3V"/>
<dbReference type="PDBsum" id="8H40"/>
<dbReference type="EMDB" id="EMD-34475"/>
<dbReference type="EMDB" id="EMD-34476"/>
<dbReference type="SMR" id="P22705"/>
<dbReference type="STRING" id="103690.gene:10493612"/>
<dbReference type="KEGG" id="ana:alr1596"/>
<dbReference type="eggNOG" id="COG0086">
    <property type="taxonomic scope" value="Bacteria"/>
</dbReference>
<dbReference type="OrthoDB" id="9815296at2"/>
<dbReference type="Proteomes" id="UP000002483">
    <property type="component" value="Chromosome"/>
</dbReference>
<dbReference type="GO" id="GO:0000428">
    <property type="term" value="C:DNA-directed RNA polymerase complex"/>
    <property type="evidence" value="ECO:0007669"/>
    <property type="project" value="UniProtKB-KW"/>
</dbReference>
<dbReference type="GO" id="GO:0003677">
    <property type="term" value="F:DNA binding"/>
    <property type="evidence" value="ECO:0007669"/>
    <property type="project" value="UniProtKB-UniRule"/>
</dbReference>
<dbReference type="GO" id="GO:0003899">
    <property type="term" value="F:DNA-directed RNA polymerase activity"/>
    <property type="evidence" value="ECO:0007669"/>
    <property type="project" value="UniProtKB-UniRule"/>
</dbReference>
<dbReference type="GO" id="GO:0008270">
    <property type="term" value="F:zinc ion binding"/>
    <property type="evidence" value="ECO:0007669"/>
    <property type="project" value="UniProtKB-UniRule"/>
</dbReference>
<dbReference type="GO" id="GO:0006351">
    <property type="term" value="P:DNA-templated transcription"/>
    <property type="evidence" value="ECO:0007669"/>
    <property type="project" value="UniProtKB-UniRule"/>
</dbReference>
<dbReference type="CDD" id="cd02655">
    <property type="entry name" value="RNAP_beta'_C"/>
    <property type="match status" value="1"/>
</dbReference>
<dbReference type="FunFam" id="1.10.150.390:FF:000002">
    <property type="entry name" value="DNA-directed RNA polymerase subunit beta"/>
    <property type="match status" value="1"/>
</dbReference>
<dbReference type="Gene3D" id="1.10.132.30">
    <property type="match status" value="1"/>
</dbReference>
<dbReference type="Gene3D" id="1.10.150.390">
    <property type="match status" value="1"/>
</dbReference>
<dbReference type="Gene3D" id="1.10.1790.20">
    <property type="match status" value="1"/>
</dbReference>
<dbReference type="Gene3D" id="2.40.50.100">
    <property type="match status" value="2"/>
</dbReference>
<dbReference type="Gene3D" id="1.10.274.100">
    <property type="entry name" value="RNA polymerase Rpb1, domain 3"/>
    <property type="match status" value="1"/>
</dbReference>
<dbReference type="HAMAP" id="MF_01324">
    <property type="entry name" value="RNApol_bact_RpoC2"/>
    <property type="match status" value="1"/>
</dbReference>
<dbReference type="InterPro" id="IPR012756">
    <property type="entry name" value="DNA-dir_RpoC2_beta_pp"/>
</dbReference>
<dbReference type="InterPro" id="IPR045867">
    <property type="entry name" value="DNA-dir_RpoC_beta_prime"/>
</dbReference>
<dbReference type="InterPro" id="IPR007066">
    <property type="entry name" value="RNA_pol_Rpb1_3"/>
</dbReference>
<dbReference type="InterPro" id="IPR042102">
    <property type="entry name" value="RNA_pol_Rpb1_3_sf"/>
</dbReference>
<dbReference type="InterPro" id="IPR007083">
    <property type="entry name" value="RNA_pol_Rpb1_4"/>
</dbReference>
<dbReference type="InterPro" id="IPR007081">
    <property type="entry name" value="RNA_pol_Rpb1_5"/>
</dbReference>
<dbReference type="InterPro" id="IPR038120">
    <property type="entry name" value="Rpb1_funnel_sf"/>
</dbReference>
<dbReference type="NCBIfam" id="NF002724">
    <property type="entry name" value="PRK02597.1"/>
    <property type="match status" value="1"/>
</dbReference>
<dbReference type="NCBIfam" id="TIGR02388">
    <property type="entry name" value="rpoC2_cyan"/>
    <property type="match status" value="1"/>
</dbReference>
<dbReference type="PANTHER" id="PTHR19376">
    <property type="entry name" value="DNA-DIRECTED RNA POLYMERASE"/>
    <property type="match status" value="1"/>
</dbReference>
<dbReference type="PANTHER" id="PTHR19376:SF68">
    <property type="entry name" value="DNA-DIRECTED RNA POLYMERASE SUBUNIT BETA"/>
    <property type="match status" value="1"/>
</dbReference>
<dbReference type="Pfam" id="PF04983">
    <property type="entry name" value="RNA_pol_Rpb1_3"/>
    <property type="match status" value="1"/>
</dbReference>
<dbReference type="Pfam" id="PF05000">
    <property type="entry name" value="RNA_pol_Rpb1_4"/>
    <property type="match status" value="1"/>
</dbReference>
<dbReference type="Pfam" id="PF04998">
    <property type="entry name" value="RNA_pol_Rpb1_5"/>
    <property type="match status" value="2"/>
</dbReference>
<dbReference type="SUPFAM" id="SSF64484">
    <property type="entry name" value="beta and beta-prime subunits of DNA dependent RNA-polymerase"/>
    <property type="match status" value="1"/>
</dbReference>
<comment type="function">
    <text evidence="1">DNA-dependent RNA polymerase catalyzes the transcription of DNA into RNA using the four ribonucleoside triphosphates as substrates.</text>
</comment>
<comment type="catalytic activity">
    <reaction evidence="1">
        <text>RNA(n) + a ribonucleoside 5'-triphosphate = RNA(n+1) + diphosphate</text>
        <dbReference type="Rhea" id="RHEA:21248"/>
        <dbReference type="Rhea" id="RHEA-COMP:14527"/>
        <dbReference type="Rhea" id="RHEA-COMP:17342"/>
        <dbReference type="ChEBI" id="CHEBI:33019"/>
        <dbReference type="ChEBI" id="CHEBI:61557"/>
        <dbReference type="ChEBI" id="CHEBI:140395"/>
        <dbReference type="EC" id="2.7.7.6"/>
    </reaction>
</comment>
<comment type="cofactor">
    <cofactor evidence="1">
        <name>Zn(2+)</name>
        <dbReference type="ChEBI" id="CHEBI:29105"/>
    </cofactor>
    <text evidence="1">Binds 1 Zn(2+) ion per subunit.</text>
</comment>
<comment type="subunit">
    <text evidence="1">In cyanobacteria the RNAP catalytic core is composed of 2 alpha, 1 beta, 1 beta', 1 gamma and 1 omega subunit. When a sigma factor is associated with the core the holoenzyme is formed, which can initiate transcription.</text>
</comment>
<comment type="similarity">
    <text evidence="1">Belongs to the RNA polymerase beta' chain family. RpoC2 subfamily.</text>
</comment>
<comment type="sequence caution" evidence="3">
    <conflict type="erroneous initiation">
        <sequence resource="EMBL-CDS" id="BAB77962"/>
    </conflict>
    <text>Truncated N-terminus.</text>
</comment>
<proteinExistence type="evidence at protein level"/>
<feature type="chain" id="PRO_0000067902" description="DNA-directed RNA polymerase subunit beta'">
    <location>
        <begin position="1"/>
        <end position="1355"/>
    </location>
</feature>
<feature type="region of interest" description="Disordered" evidence="2">
    <location>
        <begin position="1331"/>
        <end position="1355"/>
    </location>
</feature>
<feature type="binding site" evidence="1">
    <location>
        <position position="219"/>
    </location>
    <ligand>
        <name>Zn(2+)</name>
        <dbReference type="ChEBI" id="CHEBI:29105"/>
    </ligand>
</feature>
<feature type="binding site" evidence="1">
    <location>
        <position position="293"/>
    </location>
    <ligand>
        <name>Zn(2+)</name>
        <dbReference type="ChEBI" id="CHEBI:29105"/>
    </ligand>
</feature>
<feature type="binding site" evidence="1">
    <location>
        <position position="300"/>
    </location>
    <ligand>
        <name>Zn(2+)</name>
        <dbReference type="ChEBI" id="CHEBI:29105"/>
    </ligand>
</feature>
<feature type="binding site" evidence="1">
    <location>
        <position position="303"/>
    </location>
    <ligand>
        <name>Zn(2+)</name>
        <dbReference type="ChEBI" id="CHEBI:29105"/>
    </ligand>
</feature>
<organism>
    <name type="scientific">Nostoc sp. (strain PCC 7120 / SAG 25.82 / UTEX 2576)</name>
    <dbReference type="NCBI Taxonomy" id="103690"/>
    <lineage>
        <taxon>Bacteria</taxon>
        <taxon>Bacillati</taxon>
        <taxon>Cyanobacteriota</taxon>
        <taxon>Cyanophyceae</taxon>
        <taxon>Nostocales</taxon>
        <taxon>Nostocaceae</taxon>
        <taxon>Nostoc</taxon>
    </lineage>
</organism>
<protein>
    <recommendedName>
        <fullName evidence="1">DNA-directed RNA polymerase subunit beta'</fullName>
        <shortName evidence="1">RNAP subunit beta'</shortName>
        <ecNumber evidence="1">2.7.7.6</ecNumber>
    </recommendedName>
    <alternativeName>
        <fullName evidence="1">RNA polymerase subunit beta'</fullName>
    </alternativeName>
    <alternativeName>
        <fullName evidence="1">Transcriptase subunit beta'</fullName>
    </alternativeName>
</protein>
<name>RPOC2_NOSS1</name>
<accession>P22705</accession>
<gene>
    <name evidence="1" type="primary">rpoC2</name>
    <name type="ordered locus">alr1596</name>
</gene>
<keyword id="KW-0002">3D-structure</keyword>
<keyword id="KW-0240">DNA-directed RNA polymerase</keyword>
<keyword id="KW-0479">Metal-binding</keyword>
<keyword id="KW-0548">Nucleotidyltransferase</keyword>
<keyword id="KW-1185">Reference proteome</keyword>
<keyword id="KW-0804">Transcription</keyword>
<keyword id="KW-0808">Transferase</keyword>
<keyword id="KW-0862">Zinc</keyword>
<sequence length="1355" mass="147583">MTNEKMIFRNRVVDKGQLRNLISWAFTHYGTARTAVMADKLKDLGFRYATRAGVSISVDDLMVPPSKRSLLEAAEEEIRATEVRYQRGEITEVERFQKVIDTWNGTSEALKDEVVTHFKQTNPLNSVYMMAFSGARGNISQVRQLVGMRGLMADPQGEIIDLPIKTNFREGLTVTEYIISSYGARKGLVDTALRTADSGYLTRRLVDVSQDVIIREIDCGTTRGIPVRPMTEGSKTLIKLSTRLLGRVVGEDVIHPKTKEVIAPRNTPISDDLAKEIEKAGVAEVVVRSPLTCEAARSVCQHCYGWSLAHAKMVDLGEAVGIIAAQSIGEPGTQLTMRTFHTGGVFTGEVAQQVRSKMDGTIKLPRKLRTRTHRTRHGEDALFVESNGIMILEPRKEGSETPAPQEIHVTQGSTIYIVDGQQVKKGQLLAEVALGGRTTRTNTEKAVKDVASDLAGEVKFAEVVPEQKTDRQGNTTTTAARGGLIWILSGEVYNLPPGAELVVKNGDRVETNGVLAETKLTTIHGGVVRLPEATPGKSTREIEIITASVVLDQATVTVQSSQGRNNYLITTGNNQVFNLRATPGTKVQNGQVVAELIDDRYRTTTGGFLKFAGVEVQKKGKAKLGYEVVQGGTLLWIPEETHEVNKDISLLLVEDGQYVEAGTEVVKDIFCQNSGVVEVTQKNDILREVVVKPGELLMVDDPEAVIGRDNTLLQPGEELLGQVATELRYIQYVESPEGPALLSRPVVEFAVPSNPDVPSTTSVSQQTGRSIQMRAVQRLPYKDSERVKSVEGVELLRTQLVLEIEQEGEQEHNASPLAADIELIPDLEDADVQRLQLVILESLVLRRDIAADATQGSTQTSLEVKDGDTIVPGSVVARTQILSKEGGIVRGVQKGSEAVRRCLVLRHSDMATLNISAKPKVKAGDLIVAGTELAPGIFAEESGQIVGVKNAGESTTTQDAALSTQNYAVTIRAGRPYRVSPGAVLQIEDGDLVQRGDNLVLLVFERAKTGDIIQGLPRIEELLEARKPKEACILAKRGGEVKVVYGDGDEAIAIKVIESNGVVTDYPLGPGQNLAMPDGSVVPAGQPLSDGPSNPHEILEVFFSLGSEDGVYACASHALQKVQTFLVNEVQMVYQSQGIDIADKHIEVIVRQMTNKVRIDDGGDTTMLPGELVELRQVEQVNEAMAITGGARAQYTPVLLGITKASLNTDSFISAASFQETTRVLTEAAIEGKSDWLRGLKENVIIGRLIPAGTGYNTYDEPGMLEDYSTLETTSVLDETDDPLDMVLDDRTARAYNLDSPGLAETGFNNRRSILDDDELIADEIHDLVEAEVEVDDEVDDDYEDDDEDDDDYED</sequence>
<evidence type="ECO:0000255" key="1">
    <source>
        <dbReference type="HAMAP-Rule" id="MF_01324"/>
    </source>
</evidence>
<evidence type="ECO:0000256" key="2">
    <source>
        <dbReference type="SAM" id="MobiDB-lite"/>
    </source>
</evidence>
<evidence type="ECO:0000305" key="3"/>